<name>HP25_TAMSI</name>
<protein>
    <recommendedName>
        <fullName>Hibernation-associated plasma protein HP-25</fullName>
    </recommendedName>
    <alternativeName>
        <fullName>Hibernator-specific blood complex 25 kDa subunit</fullName>
    </alternativeName>
</protein>
<organism>
    <name type="scientific">Tamias sibiricus</name>
    <name type="common">Siberian chipmunk</name>
    <name type="synonym">Eutamias sibiricus</name>
    <dbReference type="NCBI Taxonomy" id="64680"/>
    <lineage>
        <taxon>Eukaryota</taxon>
        <taxon>Metazoa</taxon>
        <taxon>Chordata</taxon>
        <taxon>Craniata</taxon>
        <taxon>Vertebrata</taxon>
        <taxon>Euteleostomi</taxon>
        <taxon>Mammalia</taxon>
        <taxon>Eutheria</taxon>
        <taxon>Euarchontoglires</taxon>
        <taxon>Glires</taxon>
        <taxon>Rodentia</taxon>
        <taxon>Sciuromorpha</taxon>
        <taxon>Sciuridae</taxon>
        <taxon>Xerinae</taxon>
        <taxon>Marmotini</taxon>
        <taxon>Tamias</taxon>
    </lineage>
</organism>
<proteinExistence type="evidence at protein level"/>
<comment type="function">
    <text>Plasma proteins HP-20, HP-25, HP-27 and HP-55 form a 140 kDa complex via disulfide bonds in the plasma and are hibernation specific.</text>
</comment>
<comment type="subcellular location">
    <subcellularLocation>
        <location>Secreted</location>
    </subcellularLocation>
</comment>
<comment type="tissue specificity">
    <text>Plasma; synthesized in the liver.</text>
</comment>
<comment type="developmental stage">
    <text>The protein complex disappears from the plasma at onset of hibernation and reappears as hibernation ceases.</text>
</comment>
<keyword id="KW-0176">Collagen</keyword>
<keyword id="KW-0903">Direct protein sequencing</keyword>
<keyword id="KW-0325">Glycoprotein</keyword>
<keyword id="KW-0909">Hibernation</keyword>
<keyword id="KW-0964">Secreted</keyword>
<keyword id="KW-0732">Signal</keyword>
<reference key="1">
    <citation type="journal article" date="1993" name="Mol. Cell. Biol.">
        <title>Hibernation-associated gene regulation of plasma proteins with a collagen-like domain in mammalian hibernators.</title>
        <authorList>
            <person name="Takamatsu N."/>
            <person name="Ohba K."/>
            <person name="Kondo J."/>
            <person name="Kondo N."/>
            <person name="Shiba T."/>
        </authorList>
    </citation>
    <scope>NUCLEOTIDE SEQUENCE [MRNA]</scope>
    <source>
        <tissue>Liver</tissue>
    </source>
</reference>
<reference key="2">
    <citation type="journal article" date="1992" name="J. Biol. Chem.">
        <title>Identification of novel blood proteins specific for mammalian hibernation.</title>
        <authorList>
            <person name="Kondo N."/>
            <person name="Kondo J."/>
        </authorList>
    </citation>
    <scope>PROTEIN SEQUENCE OF 29-62; 84-130; 172-183; 187-192 AND 201-215</scope>
    <source>
        <tissue>Plasma</tissue>
    </source>
</reference>
<dbReference type="EMBL" id="D12975">
    <property type="protein sequence ID" value="BAA02352.1"/>
    <property type="molecule type" value="mRNA"/>
</dbReference>
<dbReference type="PIR" id="B48150">
    <property type="entry name" value="B48150"/>
</dbReference>
<dbReference type="SMR" id="Q06576"/>
<dbReference type="GO" id="GO:0005581">
    <property type="term" value="C:collagen trimer"/>
    <property type="evidence" value="ECO:0007669"/>
    <property type="project" value="UniProtKB-KW"/>
</dbReference>
<dbReference type="GO" id="GO:0005576">
    <property type="term" value="C:extracellular region"/>
    <property type="evidence" value="ECO:0007669"/>
    <property type="project" value="UniProtKB-SubCell"/>
</dbReference>
<dbReference type="GO" id="GO:0042750">
    <property type="term" value="P:hibernation"/>
    <property type="evidence" value="ECO:0007669"/>
    <property type="project" value="UniProtKB-KW"/>
</dbReference>
<dbReference type="Gene3D" id="2.60.120.40">
    <property type="match status" value="1"/>
</dbReference>
<dbReference type="InterPro" id="IPR001073">
    <property type="entry name" value="C1q_dom"/>
</dbReference>
<dbReference type="InterPro" id="IPR008160">
    <property type="entry name" value="Collagen"/>
</dbReference>
<dbReference type="InterPro" id="IPR050392">
    <property type="entry name" value="Collagen/C1q_domain"/>
</dbReference>
<dbReference type="InterPro" id="IPR008983">
    <property type="entry name" value="Tumour_necrosis_fac-like_dom"/>
</dbReference>
<dbReference type="PANTHER" id="PTHR15427">
    <property type="entry name" value="EMILIN ELASTIN MICROFIBRIL INTERFACE-LOCATED PROTEIN ELASTIN MICROFIBRIL INTERFACER"/>
    <property type="match status" value="1"/>
</dbReference>
<dbReference type="PANTHER" id="PTHR15427:SF34">
    <property type="entry name" value="PROTEIN HP-25 HOMOLOG 2"/>
    <property type="match status" value="1"/>
</dbReference>
<dbReference type="Pfam" id="PF00386">
    <property type="entry name" value="C1q"/>
    <property type="match status" value="1"/>
</dbReference>
<dbReference type="Pfam" id="PF01391">
    <property type="entry name" value="Collagen"/>
    <property type="match status" value="1"/>
</dbReference>
<dbReference type="PRINTS" id="PR00007">
    <property type="entry name" value="COMPLEMNTC1Q"/>
</dbReference>
<dbReference type="SMART" id="SM00110">
    <property type="entry name" value="C1Q"/>
    <property type="match status" value="1"/>
</dbReference>
<dbReference type="SUPFAM" id="SSF49842">
    <property type="entry name" value="TNF-like"/>
    <property type="match status" value="1"/>
</dbReference>
<dbReference type="PROSITE" id="PS50871">
    <property type="entry name" value="C1Q"/>
    <property type="match status" value="1"/>
</dbReference>
<evidence type="ECO:0000255" key="1"/>
<evidence type="ECO:0000255" key="2">
    <source>
        <dbReference type="PROSITE-ProRule" id="PRU00368"/>
    </source>
</evidence>
<evidence type="ECO:0000256" key="3">
    <source>
        <dbReference type="SAM" id="MobiDB-lite"/>
    </source>
</evidence>
<evidence type="ECO:0000269" key="4">
    <source>
    </source>
</evidence>
<feature type="signal peptide" evidence="4">
    <location>
        <begin position="1"/>
        <end position="28"/>
    </location>
</feature>
<feature type="chain" id="PRO_0000003559" description="Hibernation-associated plasma protein HP-25">
    <location>
        <begin position="29"/>
        <end position="215"/>
    </location>
</feature>
<feature type="domain" description="Collagen-like">
    <location>
        <begin position="40"/>
        <end position="81"/>
    </location>
</feature>
<feature type="domain" description="C1q" evidence="2">
    <location>
        <begin position="85"/>
        <end position="215"/>
    </location>
</feature>
<feature type="region of interest" description="Disordered" evidence="3">
    <location>
        <begin position="29"/>
        <end position="96"/>
    </location>
</feature>
<feature type="compositionally biased region" description="Pro residues" evidence="3">
    <location>
        <begin position="39"/>
        <end position="51"/>
    </location>
</feature>
<feature type="compositionally biased region" description="Pro residues" evidence="3">
    <location>
        <begin position="60"/>
        <end position="77"/>
    </location>
</feature>
<feature type="glycosylation site" description="N-linked (GlcNAc...) asparagine" evidence="1">
    <location>
        <position position="167"/>
    </location>
</feature>
<accession>Q06576</accession>
<sequence length="215" mass="22664">MPAQRGGALSMGAAGFWILVLSITSALADSNNQGNSEPCGPPGPPGPPGIPGFPGAPGALGPPGPPGVPGIPGPQGPPGDVEKCSSRPKSAFAVKLSERPPEPFQPIVFKEALYNQEGHFNMATGEFSCVLPGVYNFGFDIRLFQSSVKIRLMRDGIQVREKEAQANDSYKHAMGSVIMALGKGDKVWLESKLKGTESEKGITHIVFFGYLLYGK</sequence>